<protein>
    <recommendedName>
        <fullName evidence="2">Small ribosomal subunit protein uS4B</fullName>
    </recommendedName>
    <alternativeName>
        <fullName evidence="3">30S ribosomal protein S4 2</fullName>
    </alternativeName>
</protein>
<feature type="chain" id="PRO_0000132368" description="Small ribosomal subunit protein uS4B">
    <location>
        <begin position="1"/>
        <end position="192"/>
    </location>
</feature>
<feature type="domain" description="S4 RNA-binding">
    <location>
        <begin position="83"/>
        <end position="145"/>
    </location>
</feature>
<organism>
    <name type="scientific">Clostridium acetobutylicum (strain ATCC 824 / DSM 792 / JCM 1419 / IAM 19013 / LMG 5710 / NBRC 13948 / NRRL B-527 / VKM B-1787 / 2291 / W)</name>
    <dbReference type="NCBI Taxonomy" id="272562"/>
    <lineage>
        <taxon>Bacteria</taxon>
        <taxon>Bacillati</taxon>
        <taxon>Bacillota</taxon>
        <taxon>Clostridia</taxon>
        <taxon>Eubacteriales</taxon>
        <taxon>Clostridiaceae</taxon>
        <taxon>Clostridium</taxon>
    </lineage>
</organism>
<evidence type="ECO:0000250" key="1"/>
<evidence type="ECO:0000255" key="2">
    <source>
        <dbReference type="HAMAP-Rule" id="MF_01306"/>
    </source>
</evidence>
<evidence type="ECO:0000305" key="3"/>
<proteinExistence type="inferred from homology"/>
<accession>Q97J08</accession>
<dbReference type="EMBL" id="AE001437">
    <property type="protein sequence ID" value="AAK79446.1"/>
    <property type="molecule type" value="Genomic_DNA"/>
</dbReference>
<dbReference type="PIR" id="C97082">
    <property type="entry name" value="C97082"/>
</dbReference>
<dbReference type="RefSeq" id="NP_348106.1">
    <property type="nucleotide sequence ID" value="NC_003030.1"/>
</dbReference>
<dbReference type="SMR" id="Q97J08"/>
<dbReference type="STRING" id="272562.CA_C1478"/>
<dbReference type="KEGG" id="cac:CA_C1478"/>
<dbReference type="PATRIC" id="fig|272562.8.peg.1680"/>
<dbReference type="eggNOG" id="COG0522">
    <property type="taxonomic scope" value="Bacteria"/>
</dbReference>
<dbReference type="HOGENOM" id="CLU_092403_0_1_9"/>
<dbReference type="OrthoDB" id="9803672at2"/>
<dbReference type="Proteomes" id="UP000000814">
    <property type="component" value="Chromosome"/>
</dbReference>
<dbReference type="GO" id="GO:0015935">
    <property type="term" value="C:small ribosomal subunit"/>
    <property type="evidence" value="ECO:0007669"/>
    <property type="project" value="InterPro"/>
</dbReference>
<dbReference type="GO" id="GO:0019843">
    <property type="term" value="F:rRNA binding"/>
    <property type="evidence" value="ECO:0007669"/>
    <property type="project" value="UniProtKB-UniRule"/>
</dbReference>
<dbReference type="GO" id="GO:0003735">
    <property type="term" value="F:structural constituent of ribosome"/>
    <property type="evidence" value="ECO:0007669"/>
    <property type="project" value="InterPro"/>
</dbReference>
<dbReference type="GO" id="GO:0042274">
    <property type="term" value="P:ribosomal small subunit biogenesis"/>
    <property type="evidence" value="ECO:0007669"/>
    <property type="project" value="TreeGrafter"/>
</dbReference>
<dbReference type="GO" id="GO:0006412">
    <property type="term" value="P:translation"/>
    <property type="evidence" value="ECO:0007669"/>
    <property type="project" value="UniProtKB-UniRule"/>
</dbReference>
<dbReference type="CDD" id="cd00165">
    <property type="entry name" value="S4"/>
    <property type="match status" value="1"/>
</dbReference>
<dbReference type="FunFam" id="3.10.290.10:FF:000001">
    <property type="entry name" value="30S ribosomal protein S4"/>
    <property type="match status" value="1"/>
</dbReference>
<dbReference type="Gene3D" id="1.10.1050.10">
    <property type="entry name" value="Ribosomal Protein S4 Delta 41, Chain A, domain 1"/>
    <property type="match status" value="1"/>
</dbReference>
<dbReference type="Gene3D" id="3.10.290.10">
    <property type="entry name" value="RNA-binding S4 domain"/>
    <property type="match status" value="1"/>
</dbReference>
<dbReference type="HAMAP" id="MF_01306_B">
    <property type="entry name" value="Ribosomal_uS4_B"/>
    <property type="match status" value="1"/>
</dbReference>
<dbReference type="InterPro" id="IPR022801">
    <property type="entry name" value="Ribosomal_uS4"/>
</dbReference>
<dbReference type="InterPro" id="IPR005709">
    <property type="entry name" value="Ribosomal_uS4_bac-type"/>
</dbReference>
<dbReference type="InterPro" id="IPR018079">
    <property type="entry name" value="Ribosomal_uS4_CS"/>
</dbReference>
<dbReference type="InterPro" id="IPR001912">
    <property type="entry name" value="Ribosomal_uS4_N"/>
</dbReference>
<dbReference type="InterPro" id="IPR002942">
    <property type="entry name" value="S4_RNA-bd"/>
</dbReference>
<dbReference type="InterPro" id="IPR036986">
    <property type="entry name" value="S4_RNA-bd_sf"/>
</dbReference>
<dbReference type="NCBIfam" id="NF003717">
    <property type="entry name" value="PRK05327.1"/>
    <property type="match status" value="1"/>
</dbReference>
<dbReference type="NCBIfam" id="TIGR01017">
    <property type="entry name" value="rpsD_bact"/>
    <property type="match status" value="1"/>
</dbReference>
<dbReference type="PANTHER" id="PTHR11831">
    <property type="entry name" value="30S 40S RIBOSOMAL PROTEIN"/>
    <property type="match status" value="1"/>
</dbReference>
<dbReference type="PANTHER" id="PTHR11831:SF4">
    <property type="entry name" value="SMALL RIBOSOMAL SUBUNIT PROTEIN US4M"/>
    <property type="match status" value="1"/>
</dbReference>
<dbReference type="Pfam" id="PF00163">
    <property type="entry name" value="Ribosomal_S4"/>
    <property type="match status" value="1"/>
</dbReference>
<dbReference type="Pfam" id="PF01479">
    <property type="entry name" value="S4"/>
    <property type="match status" value="1"/>
</dbReference>
<dbReference type="SMART" id="SM01390">
    <property type="entry name" value="Ribosomal_S4"/>
    <property type="match status" value="1"/>
</dbReference>
<dbReference type="SMART" id="SM00363">
    <property type="entry name" value="S4"/>
    <property type="match status" value="1"/>
</dbReference>
<dbReference type="SUPFAM" id="SSF55174">
    <property type="entry name" value="Alpha-L RNA-binding motif"/>
    <property type="match status" value="1"/>
</dbReference>
<dbReference type="PROSITE" id="PS00632">
    <property type="entry name" value="RIBOSOMAL_S4"/>
    <property type="match status" value="1"/>
</dbReference>
<dbReference type="PROSITE" id="PS50889">
    <property type="entry name" value="S4"/>
    <property type="match status" value="1"/>
</dbReference>
<gene>
    <name type="primary">rpsD2</name>
    <name type="ordered locus">CA_C1478</name>
</gene>
<sequence length="192" mass="22107">MARFMGPRFKLARHLGVNVFGHPKALNRGVKQHKLSEYGEQLLEKQKLRAYYGVLEKQFKKIVFNALKSKEKSEDILVQSLERRLDNLVYRLGFGSTLREARQMVSHGHILVNGQKVDIPSYKVNIGDEVSLRSKSRKIQTYASNFTTIIPAVTYIEKDTESFSGRLIRLPKSVEVPVMVKYSKVLEFYSKN</sequence>
<comment type="function">
    <text evidence="1">One of the primary rRNA binding proteins, it binds directly to 16S rRNA where it nucleates assembly of the body of the 30S subunit.</text>
</comment>
<comment type="function">
    <text evidence="1">With S5 and S12 plays an important role in translational accuracy.</text>
</comment>
<comment type="subunit">
    <text evidence="1">Part of the 30S ribosomal subunit. Contacts protein S5. The interaction surface between S4 and S5 is involved in control of translational fidelity (By similarity).</text>
</comment>
<comment type="similarity">
    <text evidence="3">Belongs to the universal ribosomal protein uS4 family.</text>
</comment>
<reference key="1">
    <citation type="journal article" date="2001" name="J. Bacteriol.">
        <title>Genome sequence and comparative analysis of the solvent-producing bacterium Clostridium acetobutylicum.</title>
        <authorList>
            <person name="Noelling J."/>
            <person name="Breton G."/>
            <person name="Omelchenko M.V."/>
            <person name="Makarova K.S."/>
            <person name="Zeng Q."/>
            <person name="Gibson R."/>
            <person name="Lee H.M."/>
            <person name="Dubois J."/>
            <person name="Qiu D."/>
            <person name="Hitti J."/>
            <person name="Wolf Y.I."/>
            <person name="Tatusov R.L."/>
            <person name="Sabathe F."/>
            <person name="Doucette-Stamm L.A."/>
            <person name="Soucaille P."/>
            <person name="Daly M.J."/>
            <person name="Bennett G.N."/>
            <person name="Koonin E.V."/>
            <person name="Smith D.R."/>
        </authorList>
    </citation>
    <scope>NUCLEOTIDE SEQUENCE [LARGE SCALE GENOMIC DNA]</scope>
    <source>
        <strain>ATCC 824 / DSM 792 / JCM 1419 / IAM 19013 / LMG 5710 / NBRC 13948 / NRRL B-527 / VKM B-1787 / 2291 / W</strain>
    </source>
</reference>
<keyword id="KW-1185">Reference proteome</keyword>
<keyword id="KW-0687">Ribonucleoprotein</keyword>
<keyword id="KW-0689">Ribosomal protein</keyword>
<keyword id="KW-0694">RNA-binding</keyword>
<keyword id="KW-0699">rRNA-binding</keyword>
<name>RS4B_CLOAB</name>